<reference key="1">
    <citation type="journal article" date="2008" name="Appl. Environ. Microbiol.">
        <title>The genome sequence of the metal-mobilizing, extremely thermoacidophilic archaeon Metallosphaera sedula provides insights into bioleaching-associated metabolism.</title>
        <authorList>
            <person name="Auernik K.S."/>
            <person name="Maezato Y."/>
            <person name="Blum P.H."/>
            <person name="Kelly R.M."/>
        </authorList>
    </citation>
    <scope>NUCLEOTIDE SEQUENCE [LARGE SCALE GENOMIC DNA]</scope>
    <source>
        <strain>ATCC 51363 / DSM 5348 / JCM 9185 / NBRC 15509 / TH2</strain>
    </source>
</reference>
<keyword id="KW-0030">Aminoacyl-tRNA synthetase</keyword>
<keyword id="KW-0067">ATP-binding</keyword>
<keyword id="KW-0963">Cytoplasm</keyword>
<keyword id="KW-0436">Ligase</keyword>
<keyword id="KW-0479">Metal-binding</keyword>
<keyword id="KW-0547">Nucleotide-binding</keyword>
<keyword id="KW-0648">Protein biosynthesis</keyword>
<keyword id="KW-1185">Reference proteome</keyword>
<keyword id="KW-0862">Zinc</keyword>
<feature type="chain" id="PRO_1000075586" description="Methionine--tRNA ligase">
    <location>
        <begin position="1"/>
        <end position="568"/>
    </location>
</feature>
<feature type="short sequence motif" description="'HIGH' region">
    <location>
        <begin position="10"/>
        <end position="20"/>
    </location>
</feature>
<feature type="short sequence motif" description="'KMSKS' region">
    <location>
        <begin position="333"/>
        <end position="337"/>
    </location>
</feature>
<feature type="binding site" evidence="1">
    <location>
        <position position="143"/>
    </location>
    <ligand>
        <name>Zn(2+)</name>
        <dbReference type="ChEBI" id="CHEBI:29105"/>
    </ligand>
</feature>
<feature type="binding site" evidence="1">
    <location>
        <position position="146"/>
    </location>
    <ligand>
        <name>Zn(2+)</name>
        <dbReference type="ChEBI" id="CHEBI:29105"/>
    </ligand>
</feature>
<feature type="binding site" evidence="1">
    <location>
        <position position="156"/>
    </location>
    <ligand>
        <name>Zn(2+)</name>
        <dbReference type="ChEBI" id="CHEBI:29105"/>
    </ligand>
</feature>
<feature type="binding site" evidence="1">
    <location>
        <position position="159"/>
    </location>
    <ligand>
        <name>Zn(2+)</name>
        <dbReference type="ChEBI" id="CHEBI:29105"/>
    </ligand>
</feature>
<feature type="binding site" evidence="1">
    <location>
        <position position="336"/>
    </location>
    <ligand>
        <name>ATP</name>
        <dbReference type="ChEBI" id="CHEBI:30616"/>
    </ligand>
</feature>
<protein>
    <recommendedName>
        <fullName evidence="1">Methionine--tRNA ligase</fullName>
        <ecNumber evidence="1">6.1.1.10</ecNumber>
    </recommendedName>
    <alternativeName>
        <fullName evidence="1">Methionyl-tRNA synthetase</fullName>
        <shortName evidence="1">MetRS</shortName>
    </alternativeName>
</protein>
<dbReference type="EC" id="6.1.1.10" evidence="1"/>
<dbReference type="EMBL" id="CP000682">
    <property type="protein sequence ID" value="ABP96053.1"/>
    <property type="molecule type" value="Genomic_DNA"/>
</dbReference>
<dbReference type="RefSeq" id="WP_012021840.1">
    <property type="nucleotide sequence ID" value="NZ_CP139956.1"/>
</dbReference>
<dbReference type="SMR" id="A4YI01"/>
<dbReference type="STRING" id="399549.Msed_1913"/>
<dbReference type="GeneID" id="97612981"/>
<dbReference type="KEGG" id="mse:Msed_1913"/>
<dbReference type="eggNOG" id="arCOG00810">
    <property type="taxonomic scope" value="Archaea"/>
</dbReference>
<dbReference type="HOGENOM" id="CLU_009710_1_2_2"/>
<dbReference type="Proteomes" id="UP000000242">
    <property type="component" value="Chromosome"/>
</dbReference>
<dbReference type="GO" id="GO:0017101">
    <property type="term" value="C:aminoacyl-tRNA synthetase multienzyme complex"/>
    <property type="evidence" value="ECO:0007669"/>
    <property type="project" value="TreeGrafter"/>
</dbReference>
<dbReference type="GO" id="GO:0005829">
    <property type="term" value="C:cytosol"/>
    <property type="evidence" value="ECO:0007669"/>
    <property type="project" value="TreeGrafter"/>
</dbReference>
<dbReference type="GO" id="GO:0005524">
    <property type="term" value="F:ATP binding"/>
    <property type="evidence" value="ECO:0007669"/>
    <property type="project" value="UniProtKB-UniRule"/>
</dbReference>
<dbReference type="GO" id="GO:0046872">
    <property type="term" value="F:metal ion binding"/>
    <property type="evidence" value="ECO:0007669"/>
    <property type="project" value="UniProtKB-KW"/>
</dbReference>
<dbReference type="GO" id="GO:0004825">
    <property type="term" value="F:methionine-tRNA ligase activity"/>
    <property type="evidence" value="ECO:0007669"/>
    <property type="project" value="UniProtKB-UniRule"/>
</dbReference>
<dbReference type="GO" id="GO:0006431">
    <property type="term" value="P:methionyl-tRNA aminoacylation"/>
    <property type="evidence" value="ECO:0007669"/>
    <property type="project" value="UniProtKB-UniRule"/>
</dbReference>
<dbReference type="CDD" id="cd07957">
    <property type="entry name" value="Anticodon_Ia_Met"/>
    <property type="match status" value="1"/>
</dbReference>
<dbReference type="CDD" id="cd00814">
    <property type="entry name" value="MetRS_core"/>
    <property type="match status" value="1"/>
</dbReference>
<dbReference type="FunFam" id="2.20.28.20:FF:000001">
    <property type="entry name" value="Methionine--tRNA ligase"/>
    <property type="match status" value="1"/>
</dbReference>
<dbReference type="Gene3D" id="3.40.50.620">
    <property type="entry name" value="HUPs"/>
    <property type="match status" value="1"/>
</dbReference>
<dbReference type="Gene3D" id="1.10.730.10">
    <property type="entry name" value="Isoleucyl-tRNA Synthetase, Domain 1"/>
    <property type="match status" value="1"/>
</dbReference>
<dbReference type="Gene3D" id="2.20.28.20">
    <property type="entry name" value="Methionyl-tRNA synthetase, Zn-domain"/>
    <property type="match status" value="1"/>
</dbReference>
<dbReference type="HAMAP" id="MF_00098">
    <property type="entry name" value="Met_tRNA_synth_type1"/>
    <property type="match status" value="1"/>
</dbReference>
<dbReference type="InterPro" id="IPR041872">
    <property type="entry name" value="Anticodon_Met"/>
</dbReference>
<dbReference type="InterPro" id="IPR023458">
    <property type="entry name" value="Met-tRNA_ligase_1"/>
</dbReference>
<dbReference type="InterPro" id="IPR014758">
    <property type="entry name" value="Met-tRNA_synth"/>
</dbReference>
<dbReference type="InterPro" id="IPR015413">
    <property type="entry name" value="Methionyl/Leucyl_tRNA_Synth"/>
</dbReference>
<dbReference type="InterPro" id="IPR033911">
    <property type="entry name" value="MetRS_core"/>
</dbReference>
<dbReference type="InterPro" id="IPR029038">
    <property type="entry name" value="MetRS_Zn"/>
</dbReference>
<dbReference type="InterPro" id="IPR014729">
    <property type="entry name" value="Rossmann-like_a/b/a_fold"/>
</dbReference>
<dbReference type="InterPro" id="IPR009080">
    <property type="entry name" value="tRNAsynth_Ia_anticodon-bd"/>
</dbReference>
<dbReference type="NCBIfam" id="TIGR00398">
    <property type="entry name" value="metG"/>
    <property type="match status" value="1"/>
</dbReference>
<dbReference type="PANTHER" id="PTHR45765">
    <property type="entry name" value="METHIONINE--TRNA LIGASE"/>
    <property type="match status" value="1"/>
</dbReference>
<dbReference type="PANTHER" id="PTHR45765:SF1">
    <property type="entry name" value="METHIONINE--TRNA LIGASE, CYTOPLASMIC"/>
    <property type="match status" value="1"/>
</dbReference>
<dbReference type="Pfam" id="PF19303">
    <property type="entry name" value="Anticodon_3"/>
    <property type="match status" value="1"/>
</dbReference>
<dbReference type="Pfam" id="PF09334">
    <property type="entry name" value="tRNA-synt_1g"/>
    <property type="match status" value="1"/>
</dbReference>
<dbReference type="PRINTS" id="PR01041">
    <property type="entry name" value="TRNASYNTHMET"/>
</dbReference>
<dbReference type="SUPFAM" id="SSF47323">
    <property type="entry name" value="Anticodon-binding domain of a subclass of class I aminoacyl-tRNA synthetases"/>
    <property type="match status" value="1"/>
</dbReference>
<dbReference type="SUPFAM" id="SSF57770">
    <property type="entry name" value="Methionyl-tRNA synthetase (MetRS), Zn-domain"/>
    <property type="match status" value="1"/>
</dbReference>
<dbReference type="SUPFAM" id="SSF52374">
    <property type="entry name" value="Nucleotidylyl transferase"/>
    <property type="match status" value="1"/>
</dbReference>
<gene>
    <name evidence="1" type="primary">metG</name>
    <name type="ordered locus">Msed_1913</name>
</gene>
<name>SYM_METS5</name>
<proteinExistence type="inferred from homology"/>
<comment type="function">
    <text evidence="1">Is required not only for elongation of protein synthesis but also for the initiation of all mRNA translation through initiator tRNA(fMet) aminoacylation.</text>
</comment>
<comment type="catalytic activity">
    <reaction evidence="1">
        <text>tRNA(Met) + L-methionine + ATP = L-methionyl-tRNA(Met) + AMP + diphosphate</text>
        <dbReference type="Rhea" id="RHEA:13481"/>
        <dbReference type="Rhea" id="RHEA-COMP:9667"/>
        <dbReference type="Rhea" id="RHEA-COMP:9698"/>
        <dbReference type="ChEBI" id="CHEBI:30616"/>
        <dbReference type="ChEBI" id="CHEBI:33019"/>
        <dbReference type="ChEBI" id="CHEBI:57844"/>
        <dbReference type="ChEBI" id="CHEBI:78442"/>
        <dbReference type="ChEBI" id="CHEBI:78530"/>
        <dbReference type="ChEBI" id="CHEBI:456215"/>
        <dbReference type="EC" id="6.1.1.10"/>
    </reaction>
</comment>
<comment type="cofactor">
    <cofactor evidence="1">
        <name>Zn(2+)</name>
        <dbReference type="ChEBI" id="CHEBI:29105"/>
    </cofactor>
    <text evidence="1">Binds 1 zinc ion per subunit.</text>
</comment>
<comment type="subcellular location">
    <subcellularLocation>
        <location evidence="1">Cytoplasm</location>
    </subcellularLocation>
</comment>
<comment type="similarity">
    <text evidence="1">Belongs to the class-I aminoacyl-tRNA synthetase family. MetG type 1 subfamily.</text>
</comment>
<organism>
    <name type="scientific">Metallosphaera sedula (strain ATCC 51363 / DSM 5348 / JCM 9185 / NBRC 15509 / TH2)</name>
    <dbReference type="NCBI Taxonomy" id="399549"/>
    <lineage>
        <taxon>Archaea</taxon>
        <taxon>Thermoproteota</taxon>
        <taxon>Thermoprotei</taxon>
        <taxon>Sulfolobales</taxon>
        <taxon>Sulfolobaceae</taxon>
        <taxon>Metallosphaera</taxon>
    </lineage>
</organism>
<accession>A4YI01</accession>
<evidence type="ECO:0000255" key="1">
    <source>
        <dbReference type="HAMAP-Rule" id="MF_00098"/>
    </source>
</evidence>
<sequence>MKILVASAWPYVQSVPHLGNLIGSILSADVFARYARLKYGKENVVFVSGSDEHGTPIEIEAIKRGVSPKSLTDQAHEYDRQLFLNTWNISFDNYTRTESEVHKSFVKEFLLGVSKYIKVEEEELPYCERDKLFLPDRFVKGTCPYCGFEDARGDQCDRCGRLLTPSLLINPKCAICGTPPVLRKTKHWFFDLRPFSEPIREWITSSQDMPENVKGTALSWVNEGLKPRSLTRDNSWGIPAPFPGAEGKTIYVWFEALLGYLSATLEYFQGRGETERWKEFWENGKVRSYYFIGKDNIPFHAVILPAMLLASEKNYALPTVIAATEYLMYEGQKFSKSRKIGIWIDEAPLIMEVDYWRFLLIRMRPEEKDMNFTWTEAIRIVNSELNDDVGNLVNRVITMVNRYFQGKIPEPKNLKEVDMRLLSRVGETLDQVSFMFEKGKLKGGTELVLTLARETNAYLNEKAPWDKVKSDVEDASNTLFVASSAIRAIALMLYPVIPEKAKLIYDQLGLDITQERWDNAKEPLKPGHVVGKPAPVFKKLPQDFEKNLNEILEKVRKEVEKRRPTLLK</sequence>